<sequence length="205" mass="23138">MRQKLDRLLEQAQINLTDQQKEQLVGFVRLLDKWNKAYNLTSVRNPDEMLVKHILDSLVVSEHLQGNNFIDVGTGPGLPGIPLAIANPDKQFVLLDSLGKRITFIKNALRELGITNVTPVLSRVEEYKEQTFDGVLSRAFASLNDMVDWCYHLPNPQGKFYALKGIYAESEVQEIKNPIGLEKVIPLSVPELVGERHLVLLNKPN</sequence>
<protein>
    <recommendedName>
        <fullName evidence="1">Ribosomal RNA small subunit methyltransferase G</fullName>
        <ecNumber evidence="1">2.1.1.170</ecNumber>
    </recommendedName>
    <alternativeName>
        <fullName evidence="1">16S rRNA 7-methylguanosine methyltransferase</fullName>
        <shortName evidence="1">16S rRNA m7G methyltransferase</shortName>
    </alternativeName>
</protein>
<reference key="1">
    <citation type="journal article" date="2008" name="J. Bacteriol.">
        <title>The complete genome sequence of Actinobacillus pleuropneumoniae L20 (serotype 5b).</title>
        <authorList>
            <person name="Foote S.J."/>
            <person name="Bosse J.T."/>
            <person name="Bouevitch A.B."/>
            <person name="Langford P.R."/>
            <person name="Young N.M."/>
            <person name="Nash J.H.E."/>
        </authorList>
    </citation>
    <scope>NUCLEOTIDE SEQUENCE [LARGE SCALE GENOMIC DNA]</scope>
    <source>
        <strain>L20</strain>
    </source>
</reference>
<comment type="function">
    <text evidence="1">Specifically methylates the N7 position of guanine in position 527 of 16S rRNA.</text>
</comment>
<comment type="catalytic activity">
    <reaction evidence="1">
        <text>guanosine(527) in 16S rRNA + S-adenosyl-L-methionine = N(7)-methylguanosine(527) in 16S rRNA + S-adenosyl-L-homocysteine</text>
        <dbReference type="Rhea" id="RHEA:42732"/>
        <dbReference type="Rhea" id="RHEA-COMP:10209"/>
        <dbReference type="Rhea" id="RHEA-COMP:10210"/>
        <dbReference type="ChEBI" id="CHEBI:57856"/>
        <dbReference type="ChEBI" id="CHEBI:59789"/>
        <dbReference type="ChEBI" id="CHEBI:74269"/>
        <dbReference type="ChEBI" id="CHEBI:74480"/>
        <dbReference type="EC" id="2.1.1.170"/>
    </reaction>
</comment>
<comment type="subcellular location">
    <subcellularLocation>
        <location evidence="1">Cytoplasm</location>
    </subcellularLocation>
</comment>
<comment type="similarity">
    <text evidence="1">Belongs to the methyltransferase superfamily. RNA methyltransferase RsmG family.</text>
</comment>
<dbReference type="EC" id="2.1.1.170" evidence="1"/>
<dbReference type="EMBL" id="CP000569">
    <property type="protein sequence ID" value="ABN74738.1"/>
    <property type="molecule type" value="Genomic_DNA"/>
</dbReference>
<dbReference type="RefSeq" id="WP_009874986.1">
    <property type="nucleotide sequence ID" value="NC_009053.1"/>
</dbReference>
<dbReference type="SMR" id="A3N2V2"/>
<dbReference type="STRING" id="416269.APL_1654"/>
<dbReference type="EnsemblBacteria" id="ABN74738">
    <property type="protein sequence ID" value="ABN74738"/>
    <property type="gene ID" value="APL_1654"/>
</dbReference>
<dbReference type="KEGG" id="apl:APL_1654"/>
<dbReference type="PATRIC" id="fig|416269.6.peg.1720"/>
<dbReference type="eggNOG" id="COG0357">
    <property type="taxonomic scope" value="Bacteria"/>
</dbReference>
<dbReference type="HOGENOM" id="CLU_065341_2_2_6"/>
<dbReference type="Proteomes" id="UP000001432">
    <property type="component" value="Chromosome"/>
</dbReference>
<dbReference type="GO" id="GO:0005829">
    <property type="term" value="C:cytosol"/>
    <property type="evidence" value="ECO:0007669"/>
    <property type="project" value="TreeGrafter"/>
</dbReference>
<dbReference type="GO" id="GO:0070043">
    <property type="term" value="F:rRNA (guanine-N7-)-methyltransferase activity"/>
    <property type="evidence" value="ECO:0007669"/>
    <property type="project" value="UniProtKB-UniRule"/>
</dbReference>
<dbReference type="CDD" id="cd02440">
    <property type="entry name" value="AdoMet_MTases"/>
    <property type="match status" value="1"/>
</dbReference>
<dbReference type="Gene3D" id="3.40.50.150">
    <property type="entry name" value="Vaccinia Virus protein VP39"/>
    <property type="match status" value="1"/>
</dbReference>
<dbReference type="HAMAP" id="MF_00074">
    <property type="entry name" value="16SrRNA_methyltr_G"/>
    <property type="match status" value="1"/>
</dbReference>
<dbReference type="InterPro" id="IPR003682">
    <property type="entry name" value="rRNA_ssu_MeTfrase_G"/>
</dbReference>
<dbReference type="InterPro" id="IPR029063">
    <property type="entry name" value="SAM-dependent_MTases_sf"/>
</dbReference>
<dbReference type="NCBIfam" id="TIGR00138">
    <property type="entry name" value="rsmG_gidB"/>
    <property type="match status" value="1"/>
</dbReference>
<dbReference type="PANTHER" id="PTHR31760">
    <property type="entry name" value="S-ADENOSYL-L-METHIONINE-DEPENDENT METHYLTRANSFERASES SUPERFAMILY PROTEIN"/>
    <property type="match status" value="1"/>
</dbReference>
<dbReference type="PANTHER" id="PTHR31760:SF0">
    <property type="entry name" value="S-ADENOSYL-L-METHIONINE-DEPENDENT METHYLTRANSFERASES SUPERFAMILY PROTEIN"/>
    <property type="match status" value="1"/>
</dbReference>
<dbReference type="Pfam" id="PF02527">
    <property type="entry name" value="GidB"/>
    <property type="match status" value="1"/>
</dbReference>
<dbReference type="PIRSF" id="PIRSF003078">
    <property type="entry name" value="GidB"/>
    <property type="match status" value="1"/>
</dbReference>
<dbReference type="SUPFAM" id="SSF53335">
    <property type="entry name" value="S-adenosyl-L-methionine-dependent methyltransferases"/>
    <property type="match status" value="1"/>
</dbReference>
<accession>A3N2V2</accession>
<evidence type="ECO:0000255" key="1">
    <source>
        <dbReference type="HAMAP-Rule" id="MF_00074"/>
    </source>
</evidence>
<feature type="chain" id="PRO_1000010111" description="Ribosomal RNA small subunit methyltransferase G">
    <location>
        <begin position="1"/>
        <end position="205"/>
    </location>
</feature>
<feature type="binding site" evidence="1">
    <location>
        <position position="73"/>
    </location>
    <ligand>
        <name>S-adenosyl-L-methionine</name>
        <dbReference type="ChEBI" id="CHEBI:59789"/>
    </ligand>
</feature>
<feature type="binding site" evidence="1">
    <location>
        <position position="78"/>
    </location>
    <ligand>
        <name>S-adenosyl-L-methionine</name>
        <dbReference type="ChEBI" id="CHEBI:59789"/>
    </ligand>
</feature>
<feature type="binding site" evidence="1">
    <location>
        <begin position="124"/>
        <end position="125"/>
    </location>
    <ligand>
        <name>S-adenosyl-L-methionine</name>
        <dbReference type="ChEBI" id="CHEBI:59789"/>
    </ligand>
</feature>
<feature type="binding site" evidence="1">
    <location>
        <position position="138"/>
    </location>
    <ligand>
        <name>S-adenosyl-L-methionine</name>
        <dbReference type="ChEBI" id="CHEBI:59789"/>
    </ligand>
</feature>
<name>RSMG_ACTP2</name>
<gene>
    <name evidence="1" type="primary">rsmG</name>
    <name type="ordered locus">APL_1654</name>
</gene>
<proteinExistence type="inferred from homology"/>
<keyword id="KW-0963">Cytoplasm</keyword>
<keyword id="KW-0489">Methyltransferase</keyword>
<keyword id="KW-1185">Reference proteome</keyword>
<keyword id="KW-0698">rRNA processing</keyword>
<keyword id="KW-0949">S-adenosyl-L-methionine</keyword>
<keyword id="KW-0808">Transferase</keyword>
<organism>
    <name type="scientific">Actinobacillus pleuropneumoniae serotype 5b (strain L20)</name>
    <dbReference type="NCBI Taxonomy" id="416269"/>
    <lineage>
        <taxon>Bacteria</taxon>
        <taxon>Pseudomonadati</taxon>
        <taxon>Pseudomonadota</taxon>
        <taxon>Gammaproteobacteria</taxon>
        <taxon>Pasteurellales</taxon>
        <taxon>Pasteurellaceae</taxon>
        <taxon>Actinobacillus</taxon>
    </lineage>
</organism>